<dbReference type="EC" id="4.2.1.80" evidence="1"/>
<dbReference type="EMBL" id="CU928164">
    <property type="protein sequence ID" value="CAR16468.1"/>
    <property type="molecule type" value="Genomic_DNA"/>
</dbReference>
<dbReference type="RefSeq" id="WP_000160712.1">
    <property type="nucleotide sequence ID" value="NC_011750.1"/>
</dbReference>
<dbReference type="RefSeq" id="YP_002406370.1">
    <property type="nucleotide sequence ID" value="NC_011750.1"/>
</dbReference>
<dbReference type="SMR" id="B7NK05"/>
<dbReference type="STRING" id="585057.ECIAI39_0328"/>
<dbReference type="KEGG" id="ect:ECIAI39_0328"/>
<dbReference type="PATRIC" id="fig|585057.6.peg.355"/>
<dbReference type="HOGENOM" id="CLU_060136_4_1_6"/>
<dbReference type="UniPathway" id="UPA00714"/>
<dbReference type="Proteomes" id="UP000000749">
    <property type="component" value="Chromosome"/>
</dbReference>
<dbReference type="GO" id="GO:0005737">
    <property type="term" value="C:cytoplasm"/>
    <property type="evidence" value="ECO:0007669"/>
    <property type="project" value="TreeGrafter"/>
</dbReference>
<dbReference type="GO" id="GO:0008684">
    <property type="term" value="F:2-oxopent-4-enoate hydratase activity"/>
    <property type="evidence" value="ECO:0007669"/>
    <property type="project" value="UniProtKB-UniRule"/>
</dbReference>
<dbReference type="GO" id="GO:0030145">
    <property type="term" value="F:manganese ion binding"/>
    <property type="evidence" value="ECO:0007669"/>
    <property type="project" value="InterPro"/>
</dbReference>
<dbReference type="GO" id="GO:0019380">
    <property type="term" value="P:3-phenylpropionate catabolic process"/>
    <property type="evidence" value="ECO:0007669"/>
    <property type="project" value="UniProtKB-UniRule"/>
</dbReference>
<dbReference type="FunFam" id="3.90.850.10:FF:000006">
    <property type="entry name" value="2-keto-4-pentenoate hydratase"/>
    <property type="match status" value="1"/>
</dbReference>
<dbReference type="Gene3D" id="3.90.850.10">
    <property type="entry name" value="Fumarylacetoacetase-like, C-terminal domain"/>
    <property type="match status" value="1"/>
</dbReference>
<dbReference type="HAMAP" id="MF_01655">
    <property type="entry name" value="MhpD"/>
    <property type="match status" value="1"/>
</dbReference>
<dbReference type="InterPro" id="IPR011234">
    <property type="entry name" value="Fumarylacetoacetase-like_C"/>
</dbReference>
<dbReference type="InterPro" id="IPR036663">
    <property type="entry name" value="Fumarylacetoacetase_C_sf"/>
</dbReference>
<dbReference type="InterPro" id="IPR050772">
    <property type="entry name" value="Hydratase-Decarb/MhpD_sf"/>
</dbReference>
<dbReference type="InterPro" id="IPR023793">
    <property type="entry name" value="Keto_pentenoate-hydratase"/>
</dbReference>
<dbReference type="NCBIfam" id="NF008461">
    <property type="entry name" value="PRK11342.1"/>
    <property type="match status" value="1"/>
</dbReference>
<dbReference type="PANTHER" id="PTHR30143:SF0">
    <property type="entry name" value="2-KETO-4-PENTENOATE HYDRATASE"/>
    <property type="match status" value="1"/>
</dbReference>
<dbReference type="PANTHER" id="PTHR30143">
    <property type="entry name" value="ACID HYDRATASE"/>
    <property type="match status" value="1"/>
</dbReference>
<dbReference type="Pfam" id="PF01557">
    <property type="entry name" value="FAA_hydrolase"/>
    <property type="match status" value="1"/>
</dbReference>
<dbReference type="SUPFAM" id="SSF56529">
    <property type="entry name" value="FAH"/>
    <property type="match status" value="1"/>
</dbReference>
<comment type="function">
    <text evidence="1">Catalyzes the conversion of 2-hydroxypentadienoic acid (enolic form of 2-oxopent-4-enoate) to 4-hydroxy-2-ketopentanoic acid.</text>
</comment>
<comment type="catalytic activity">
    <reaction evidence="1">
        <text>(S)-4-hydroxy-2-oxopentanoate = (2Z)-2-hydroxypenta-2,4-dienoate + H2O</text>
        <dbReference type="Rhea" id="RHEA:22580"/>
        <dbReference type="ChEBI" id="CHEBI:15377"/>
        <dbReference type="ChEBI" id="CHEBI:67152"/>
        <dbReference type="ChEBI" id="CHEBI:73143"/>
        <dbReference type="EC" id="4.2.1.80"/>
    </reaction>
</comment>
<comment type="cofactor">
    <cofactor evidence="1">
        <name>a divalent metal cation</name>
        <dbReference type="ChEBI" id="CHEBI:60240"/>
    </cofactor>
</comment>
<comment type="pathway">
    <text evidence="1">Aromatic compound metabolism; 3-phenylpropanoate degradation.</text>
</comment>
<comment type="similarity">
    <text evidence="1">Belongs to the hydratase/decarboxylase family. MhpD subfamily.</text>
</comment>
<keyword id="KW-0058">Aromatic hydrocarbons catabolism</keyword>
<keyword id="KW-0456">Lyase</keyword>
<protein>
    <recommendedName>
        <fullName evidence="1">2-keto-4-pentenoate hydratase</fullName>
        <ecNumber evidence="1">4.2.1.80</ecNumber>
    </recommendedName>
    <alternativeName>
        <fullName evidence="1">2-hydroxypentadienoic acid hydratase</fullName>
    </alternativeName>
</protein>
<sequence length="269" mass="28848">MTKHTLEQLAADLRRAAEQGEAIAPLRDLIGIDNAEAAYAIQHINVQHDVAQGRRVVGRKVGLTHPKVQQQLGVDQPDFGTLFADMCYGDNETIPFSRVLQPRIEAEIALVLNRDLPATDITFDELYNAIEWVLPALEVVGSRIRDWSIQFVDTVADNASCGVYVIGGPAQRPAGLDLKNCAMKMTRNNEEVSSGRGSECLGHPLNAAVWLARKMASLGEPLRAGDIILTGALGPMVAVNAGDRFEAHIEGIGSVAATFSSAAPKGSLS</sequence>
<reference key="1">
    <citation type="journal article" date="2009" name="PLoS Genet.">
        <title>Organised genome dynamics in the Escherichia coli species results in highly diverse adaptive paths.</title>
        <authorList>
            <person name="Touchon M."/>
            <person name="Hoede C."/>
            <person name="Tenaillon O."/>
            <person name="Barbe V."/>
            <person name="Baeriswyl S."/>
            <person name="Bidet P."/>
            <person name="Bingen E."/>
            <person name="Bonacorsi S."/>
            <person name="Bouchier C."/>
            <person name="Bouvet O."/>
            <person name="Calteau A."/>
            <person name="Chiapello H."/>
            <person name="Clermont O."/>
            <person name="Cruveiller S."/>
            <person name="Danchin A."/>
            <person name="Diard M."/>
            <person name="Dossat C."/>
            <person name="Karoui M.E."/>
            <person name="Frapy E."/>
            <person name="Garry L."/>
            <person name="Ghigo J.M."/>
            <person name="Gilles A.M."/>
            <person name="Johnson J."/>
            <person name="Le Bouguenec C."/>
            <person name="Lescat M."/>
            <person name="Mangenot S."/>
            <person name="Martinez-Jehanne V."/>
            <person name="Matic I."/>
            <person name="Nassif X."/>
            <person name="Oztas S."/>
            <person name="Petit M.A."/>
            <person name="Pichon C."/>
            <person name="Rouy Z."/>
            <person name="Ruf C.S."/>
            <person name="Schneider D."/>
            <person name="Tourret J."/>
            <person name="Vacherie B."/>
            <person name="Vallenet D."/>
            <person name="Medigue C."/>
            <person name="Rocha E.P.C."/>
            <person name="Denamur E."/>
        </authorList>
    </citation>
    <scope>NUCLEOTIDE SEQUENCE [LARGE SCALE GENOMIC DNA]</scope>
    <source>
        <strain>IAI39 / ExPEC</strain>
    </source>
</reference>
<evidence type="ECO:0000255" key="1">
    <source>
        <dbReference type="HAMAP-Rule" id="MF_01655"/>
    </source>
</evidence>
<organism>
    <name type="scientific">Escherichia coli O7:K1 (strain IAI39 / ExPEC)</name>
    <dbReference type="NCBI Taxonomy" id="585057"/>
    <lineage>
        <taxon>Bacteria</taxon>
        <taxon>Pseudomonadati</taxon>
        <taxon>Pseudomonadota</taxon>
        <taxon>Gammaproteobacteria</taxon>
        <taxon>Enterobacterales</taxon>
        <taxon>Enterobacteriaceae</taxon>
        <taxon>Escherichia</taxon>
    </lineage>
</organism>
<accession>B7NK05</accession>
<feature type="chain" id="PRO_1000187022" description="2-keto-4-pentenoate hydratase">
    <location>
        <begin position="1"/>
        <end position="269"/>
    </location>
</feature>
<gene>
    <name evidence="1" type="primary">mhpD</name>
    <name type="ordered locus">ECIAI39_0328</name>
</gene>
<name>MHPD_ECO7I</name>
<proteinExistence type="inferred from homology"/>